<sequence>MAMDLLRHRLGRIDYLPAYEAMQVFTAARTPETPDELWICEHPPVYTQGLAGKAEHVFNPGTIPVVQTNRGGQVTYHGPGQVVAYPLLDLKRAGYFIKEYVYRIEEAVIRTLVEFGVTGHRVAGAPGIYVRLDDPGSHALLPQRPMKSGLANPSFGGLGKIAALGLKVSRNCTYHGVALNVAMDLEPYTRINPCGYAGLQTVDLSTIGVCAGWDEVAELLGDKLTRYLAP</sequence>
<proteinExistence type="inferred from homology"/>
<keyword id="KW-0012">Acyltransferase</keyword>
<keyword id="KW-0963">Cytoplasm</keyword>
<keyword id="KW-1185">Reference proteome</keyword>
<keyword id="KW-0808">Transferase</keyword>
<reference key="1">
    <citation type="submission" date="2006-02" db="EMBL/GenBank/DDBJ databases">
        <title>Complete sequence of chromosome of Rhodoferax ferrireducens DSM 15236.</title>
        <authorList>
            <person name="Copeland A."/>
            <person name="Lucas S."/>
            <person name="Lapidus A."/>
            <person name="Barry K."/>
            <person name="Detter J.C."/>
            <person name="Glavina del Rio T."/>
            <person name="Hammon N."/>
            <person name="Israni S."/>
            <person name="Pitluck S."/>
            <person name="Brettin T."/>
            <person name="Bruce D."/>
            <person name="Han C."/>
            <person name="Tapia R."/>
            <person name="Gilna P."/>
            <person name="Kiss H."/>
            <person name="Schmutz J."/>
            <person name="Larimer F."/>
            <person name="Land M."/>
            <person name="Kyrpides N."/>
            <person name="Ivanova N."/>
            <person name="Richardson P."/>
        </authorList>
    </citation>
    <scope>NUCLEOTIDE SEQUENCE [LARGE SCALE GENOMIC DNA]</scope>
    <source>
        <strain>ATCC BAA-621 / DSM 15236 / T118</strain>
    </source>
</reference>
<organism>
    <name type="scientific">Albidiferax ferrireducens (strain ATCC BAA-621 / DSM 15236 / T118)</name>
    <name type="common">Rhodoferax ferrireducens</name>
    <dbReference type="NCBI Taxonomy" id="338969"/>
    <lineage>
        <taxon>Bacteria</taxon>
        <taxon>Pseudomonadati</taxon>
        <taxon>Pseudomonadota</taxon>
        <taxon>Betaproteobacteria</taxon>
        <taxon>Burkholderiales</taxon>
        <taxon>Comamonadaceae</taxon>
        <taxon>Rhodoferax</taxon>
    </lineage>
</organism>
<name>LIPB_ALBFT</name>
<comment type="function">
    <text evidence="1">Catalyzes the transfer of endogenously produced octanoic acid from octanoyl-acyl-carrier-protein onto the lipoyl domains of lipoate-dependent enzymes. Lipoyl-ACP can also act as a substrate although octanoyl-ACP is likely to be the physiological substrate.</text>
</comment>
<comment type="catalytic activity">
    <reaction evidence="1">
        <text>octanoyl-[ACP] + L-lysyl-[protein] = N(6)-octanoyl-L-lysyl-[protein] + holo-[ACP] + H(+)</text>
        <dbReference type="Rhea" id="RHEA:17665"/>
        <dbReference type="Rhea" id="RHEA-COMP:9636"/>
        <dbReference type="Rhea" id="RHEA-COMP:9685"/>
        <dbReference type="Rhea" id="RHEA-COMP:9752"/>
        <dbReference type="Rhea" id="RHEA-COMP:9928"/>
        <dbReference type="ChEBI" id="CHEBI:15378"/>
        <dbReference type="ChEBI" id="CHEBI:29969"/>
        <dbReference type="ChEBI" id="CHEBI:64479"/>
        <dbReference type="ChEBI" id="CHEBI:78463"/>
        <dbReference type="ChEBI" id="CHEBI:78809"/>
        <dbReference type="EC" id="2.3.1.181"/>
    </reaction>
</comment>
<comment type="pathway">
    <text evidence="1">Protein modification; protein lipoylation via endogenous pathway; protein N(6)-(lipoyl)lysine from octanoyl-[acyl-carrier-protein]: step 1/2.</text>
</comment>
<comment type="subcellular location">
    <subcellularLocation>
        <location evidence="1">Cytoplasm</location>
    </subcellularLocation>
</comment>
<comment type="miscellaneous">
    <text evidence="1">In the reaction, the free carboxyl group of octanoic acid is attached via an amide linkage to the epsilon-amino group of a specific lysine residue of lipoyl domains of lipoate-dependent enzymes.</text>
</comment>
<comment type="similarity">
    <text evidence="1">Belongs to the LipB family.</text>
</comment>
<dbReference type="EC" id="2.3.1.181" evidence="1"/>
<dbReference type="EMBL" id="CP000267">
    <property type="protein sequence ID" value="ABD71634.1"/>
    <property type="molecule type" value="Genomic_DNA"/>
</dbReference>
<dbReference type="RefSeq" id="WP_011466196.1">
    <property type="nucleotide sequence ID" value="NC_007908.1"/>
</dbReference>
<dbReference type="SMR" id="Q21RG9"/>
<dbReference type="STRING" id="338969.Rfer_3935"/>
<dbReference type="KEGG" id="rfr:Rfer_3935"/>
<dbReference type="eggNOG" id="COG0321">
    <property type="taxonomic scope" value="Bacteria"/>
</dbReference>
<dbReference type="HOGENOM" id="CLU_035168_3_1_4"/>
<dbReference type="UniPathway" id="UPA00538">
    <property type="reaction ID" value="UER00592"/>
</dbReference>
<dbReference type="Proteomes" id="UP000008332">
    <property type="component" value="Chromosome"/>
</dbReference>
<dbReference type="GO" id="GO:0005737">
    <property type="term" value="C:cytoplasm"/>
    <property type="evidence" value="ECO:0007669"/>
    <property type="project" value="UniProtKB-SubCell"/>
</dbReference>
<dbReference type="GO" id="GO:0033819">
    <property type="term" value="F:lipoyl(octanoyl) transferase activity"/>
    <property type="evidence" value="ECO:0007669"/>
    <property type="project" value="UniProtKB-EC"/>
</dbReference>
<dbReference type="GO" id="GO:0036211">
    <property type="term" value="P:protein modification process"/>
    <property type="evidence" value="ECO:0007669"/>
    <property type="project" value="InterPro"/>
</dbReference>
<dbReference type="CDD" id="cd16444">
    <property type="entry name" value="LipB"/>
    <property type="match status" value="1"/>
</dbReference>
<dbReference type="Gene3D" id="3.30.930.10">
    <property type="entry name" value="Bira Bifunctional Protein, Domain 2"/>
    <property type="match status" value="1"/>
</dbReference>
<dbReference type="HAMAP" id="MF_00013">
    <property type="entry name" value="LipB"/>
    <property type="match status" value="1"/>
</dbReference>
<dbReference type="InterPro" id="IPR045864">
    <property type="entry name" value="aa-tRNA-synth_II/BPL/LPL"/>
</dbReference>
<dbReference type="InterPro" id="IPR004143">
    <property type="entry name" value="BPL_LPL_catalytic"/>
</dbReference>
<dbReference type="InterPro" id="IPR000544">
    <property type="entry name" value="Octanoyltransferase"/>
</dbReference>
<dbReference type="InterPro" id="IPR020605">
    <property type="entry name" value="Octanoyltransferase_CS"/>
</dbReference>
<dbReference type="NCBIfam" id="TIGR00214">
    <property type="entry name" value="lipB"/>
    <property type="match status" value="1"/>
</dbReference>
<dbReference type="PANTHER" id="PTHR10993:SF7">
    <property type="entry name" value="LIPOYLTRANSFERASE 2, MITOCHONDRIAL-RELATED"/>
    <property type="match status" value="1"/>
</dbReference>
<dbReference type="PANTHER" id="PTHR10993">
    <property type="entry name" value="OCTANOYLTRANSFERASE"/>
    <property type="match status" value="1"/>
</dbReference>
<dbReference type="Pfam" id="PF21948">
    <property type="entry name" value="LplA-B_cat"/>
    <property type="match status" value="1"/>
</dbReference>
<dbReference type="PIRSF" id="PIRSF016262">
    <property type="entry name" value="LPLase"/>
    <property type="match status" value="1"/>
</dbReference>
<dbReference type="SUPFAM" id="SSF55681">
    <property type="entry name" value="Class II aaRS and biotin synthetases"/>
    <property type="match status" value="1"/>
</dbReference>
<dbReference type="PROSITE" id="PS51733">
    <property type="entry name" value="BPL_LPL_CATALYTIC"/>
    <property type="match status" value="1"/>
</dbReference>
<dbReference type="PROSITE" id="PS01313">
    <property type="entry name" value="LIPB"/>
    <property type="match status" value="1"/>
</dbReference>
<feature type="chain" id="PRO_0000242755" description="Octanoyltransferase">
    <location>
        <begin position="1"/>
        <end position="230"/>
    </location>
</feature>
<feature type="domain" description="BPL/LPL catalytic" evidence="2">
    <location>
        <begin position="31"/>
        <end position="230"/>
    </location>
</feature>
<feature type="active site" description="Acyl-thioester intermediate" evidence="1">
    <location>
        <position position="194"/>
    </location>
</feature>
<feature type="binding site" evidence="1">
    <location>
        <begin position="70"/>
        <end position="77"/>
    </location>
    <ligand>
        <name>substrate</name>
    </ligand>
</feature>
<feature type="binding site" evidence="1">
    <location>
        <begin position="163"/>
        <end position="165"/>
    </location>
    <ligand>
        <name>substrate</name>
    </ligand>
</feature>
<feature type="binding site" evidence="1">
    <location>
        <begin position="176"/>
        <end position="178"/>
    </location>
    <ligand>
        <name>substrate</name>
    </ligand>
</feature>
<feature type="site" description="Lowers pKa of active site Cys" evidence="1">
    <location>
        <position position="160"/>
    </location>
</feature>
<evidence type="ECO:0000255" key="1">
    <source>
        <dbReference type="HAMAP-Rule" id="MF_00013"/>
    </source>
</evidence>
<evidence type="ECO:0000255" key="2">
    <source>
        <dbReference type="PROSITE-ProRule" id="PRU01067"/>
    </source>
</evidence>
<gene>
    <name evidence="1" type="primary">lipB</name>
    <name type="ordered locus">Rfer_3935</name>
</gene>
<protein>
    <recommendedName>
        <fullName evidence="1">Octanoyltransferase</fullName>
        <ecNumber evidence="1">2.3.1.181</ecNumber>
    </recommendedName>
    <alternativeName>
        <fullName evidence="1">Lipoate-protein ligase B</fullName>
    </alternativeName>
    <alternativeName>
        <fullName evidence="1">Lipoyl/octanoyl transferase</fullName>
    </alternativeName>
    <alternativeName>
        <fullName evidence="1">Octanoyl-[acyl-carrier-protein]-protein N-octanoyltransferase</fullName>
    </alternativeName>
</protein>
<accession>Q21RG9</accession>